<gene>
    <name type="primary">alr</name>
    <name type="ordered locus">Shew_3277</name>
</gene>
<organism>
    <name type="scientific">Shewanella loihica (strain ATCC BAA-1088 / PV-4)</name>
    <dbReference type="NCBI Taxonomy" id="323850"/>
    <lineage>
        <taxon>Bacteria</taxon>
        <taxon>Pseudomonadati</taxon>
        <taxon>Pseudomonadota</taxon>
        <taxon>Gammaproteobacteria</taxon>
        <taxon>Alteromonadales</taxon>
        <taxon>Shewanellaceae</taxon>
        <taxon>Shewanella</taxon>
    </lineage>
</organism>
<protein>
    <recommendedName>
        <fullName evidence="1">Alanine racemase</fullName>
        <ecNumber evidence="1">5.1.1.1</ecNumber>
    </recommendedName>
</protein>
<reference key="1">
    <citation type="submission" date="2007-03" db="EMBL/GenBank/DDBJ databases">
        <title>Complete sequence of Shewanella loihica PV-4.</title>
        <authorList>
            <consortium name="US DOE Joint Genome Institute"/>
            <person name="Copeland A."/>
            <person name="Lucas S."/>
            <person name="Lapidus A."/>
            <person name="Barry K."/>
            <person name="Detter J.C."/>
            <person name="Glavina del Rio T."/>
            <person name="Hammon N."/>
            <person name="Israni S."/>
            <person name="Dalin E."/>
            <person name="Tice H."/>
            <person name="Pitluck S."/>
            <person name="Chain P."/>
            <person name="Malfatti S."/>
            <person name="Shin M."/>
            <person name="Vergez L."/>
            <person name="Schmutz J."/>
            <person name="Larimer F."/>
            <person name="Land M."/>
            <person name="Hauser L."/>
            <person name="Kyrpides N."/>
            <person name="Mikhailova N."/>
            <person name="Romine M.F."/>
            <person name="Serres G."/>
            <person name="Fredrickson J."/>
            <person name="Tiedje J."/>
            <person name="Richardson P."/>
        </authorList>
    </citation>
    <scope>NUCLEOTIDE SEQUENCE [LARGE SCALE GENOMIC DNA]</scope>
    <source>
        <strain>ATCC BAA-1088 / PV-4</strain>
    </source>
</reference>
<sequence>MKPFPRAEISGDALKANLKRLRQLAPQSKVMAVVKANGYGHGLLNVAHCLASADGFGLARLEEALELRAGGVSAKLLLLEGFFRPSDVATLVEHDIDTVVHHESQLEMLEAASLAKPVTVWMKIDTGMHRLGFNLDQFEAIYQRLQACANVAKPINLMTHFACADEPDNPATAEQARRFEQMTANLPGDRTLANSAATLYWQATQADWIRPGIALYGVSPVVGDLGRNHGLEPAMELVSQLIAVRDHKAGDPVGYGSYWRAKQDTKLGVVAIGYGDGYPRNAPEGTPVWVNGRLVPVVGRVSMDMLTVDLGLDATDKVGDTAVLWGKALPVEEVAEHIGTIAYELVTKLTPRVAVCLE</sequence>
<proteinExistence type="inferred from homology"/>
<evidence type="ECO:0000255" key="1">
    <source>
        <dbReference type="HAMAP-Rule" id="MF_01201"/>
    </source>
</evidence>
<accession>A3QI45</accession>
<dbReference type="EC" id="5.1.1.1" evidence="1"/>
<dbReference type="EMBL" id="CP000606">
    <property type="protein sequence ID" value="ABO25143.1"/>
    <property type="molecule type" value="Genomic_DNA"/>
</dbReference>
<dbReference type="RefSeq" id="WP_011867073.1">
    <property type="nucleotide sequence ID" value="NC_009092.1"/>
</dbReference>
<dbReference type="SMR" id="A3QI45"/>
<dbReference type="STRING" id="323850.Shew_3277"/>
<dbReference type="KEGG" id="slo:Shew_3277"/>
<dbReference type="eggNOG" id="COG0787">
    <property type="taxonomic scope" value="Bacteria"/>
</dbReference>
<dbReference type="HOGENOM" id="CLU_028393_1_0_6"/>
<dbReference type="OrthoDB" id="9813814at2"/>
<dbReference type="UniPathway" id="UPA00042">
    <property type="reaction ID" value="UER00497"/>
</dbReference>
<dbReference type="Proteomes" id="UP000001558">
    <property type="component" value="Chromosome"/>
</dbReference>
<dbReference type="GO" id="GO:0005829">
    <property type="term" value="C:cytosol"/>
    <property type="evidence" value="ECO:0007669"/>
    <property type="project" value="TreeGrafter"/>
</dbReference>
<dbReference type="GO" id="GO:0008784">
    <property type="term" value="F:alanine racemase activity"/>
    <property type="evidence" value="ECO:0007669"/>
    <property type="project" value="UniProtKB-UniRule"/>
</dbReference>
<dbReference type="GO" id="GO:0030170">
    <property type="term" value="F:pyridoxal phosphate binding"/>
    <property type="evidence" value="ECO:0007669"/>
    <property type="project" value="UniProtKB-UniRule"/>
</dbReference>
<dbReference type="GO" id="GO:0030632">
    <property type="term" value="P:D-alanine biosynthetic process"/>
    <property type="evidence" value="ECO:0007669"/>
    <property type="project" value="UniProtKB-UniRule"/>
</dbReference>
<dbReference type="CDD" id="cd06827">
    <property type="entry name" value="PLPDE_III_AR_proteobact"/>
    <property type="match status" value="1"/>
</dbReference>
<dbReference type="FunFam" id="2.40.37.10:FF:000002">
    <property type="entry name" value="Alanine racemase"/>
    <property type="match status" value="1"/>
</dbReference>
<dbReference type="FunFam" id="3.20.20.10:FF:000002">
    <property type="entry name" value="Alanine racemase"/>
    <property type="match status" value="1"/>
</dbReference>
<dbReference type="Gene3D" id="3.20.20.10">
    <property type="entry name" value="Alanine racemase"/>
    <property type="match status" value="1"/>
</dbReference>
<dbReference type="Gene3D" id="2.40.37.10">
    <property type="entry name" value="Lyase, Ornithine Decarboxylase, Chain A, domain 1"/>
    <property type="match status" value="1"/>
</dbReference>
<dbReference type="HAMAP" id="MF_01201">
    <property type="entry name" value="Ala_racemase"/>
    <property type="match status" value="1"/>
</dbReference>
<dbReference type="InterPro" id="IPR000821">
    <property type="entry name" value="Ala_racemase"/>
</dbReference>
<dbReference type="InterPro" id="IPR009006">
    <property type="entry name" value="Ala_racemase/Decarboxylase_C"/>
</dbReference>
<dbReference type="InterPro" id="IPR011079">
    <property type="entry name" value="Ala_racemase_C"/>
</dbReference>
<dbReference type="InterPro" id="IPR001608">
    <property type="entry name" value="Ala_racemase_N"/>
</dbReference>
<dbReference type="InterPro" id="IPR020622">
    <property type="entry name" value="Ala_racemase_pyridoxalP-BS"/>
</dbReference>
<dbReference type="InterPro" id="IPR029066">
    <property type="entry name" value="PLP-binding_barrel"/>
</dbReference>
<dbReference type="NCBIfam" id="TIGR00492">
    <property type="entry name" value="alr"/>
    <property type="match status" value="1"/>
</dbReference>
<dbReference type="PANTHER" id="PTHR30511">
    <property type="entry name" value="ALANINE RACEMASE"/>
    <property type="match status" value="1"/>
</dbReference>
<dbReference type="PANTHER" id="PTHR30511:SF4">
    <property type="entry name" value="ALANINE RACEMASE, BIOSYNTHETIC"/>
    <property type="match status" value="1"/>
</dbReference>
<dbReference type="Pfam" id="PF00842">
    <property type="entry name" value="Ala_racemase_C"/>
    <property type="match status" value="1"/>
</dbReference>
<dbReference type="Pfam" id="PF01168">
    <property type="entry name" value="Ala_racemase_N"/>
    <property type="match status" value="1"/>
</dbReference>
<dbReference type="PRINTS" id="PR00992">
    <property type="entry name" value="ALARACEMASE"/>
</dbReference>
<dbReference type="SMART" id="SM01005">
    <property type="entry name" value="Ala_racemase_C"/>
    <property type="match status" value="1"/>
</dbReference>
<dbReference type="SUPFAM" id="SSF50621">
    <property type="entry name" value="Alanine racemase C-terminal domain-like"/>
    <property type="match status" value="1"/>
</dbReference>
<dbReference type="SUPFAM" id="SSF51419">
    <property type="entry name" value="PLP-binding barrel"/>
    <property type="match status" value="1"/>
</dbReference>
<dbReference type="PROSITE" id="PS00395">
    <property type="entry name" value="ALANINE_RACEMASE"/>
    <property type="match status" value="1"/>
</dbReference>
<comment type="function">
    <text evidence="1">Catalyzes the interconversion of L-alanine and D-alanine. May also act on other amino acids.</text>
</comment>
<comment type="catalytic activity">
    <reaction evidence="1">
        <text>L-alanine = D-alanine</text>
        <dbReference type="Rhea" id="RHEA:20249"/>
        <dbReference type="ChEBI" id="CHEBI:57416"/>
        <dbReference type="ChEBI" id="CHEBI:57972"/>
        <dbReference type="EC" id="5.1.1.1"/>
    </reaction>
</comment>
<comment type="cofactor">
    <cofactor evidence="1">
        <name>pyridoxal 5'-phosphate</name>
        <dbReference type="ChEBI" id="CHEBI:597326"/>
    </cofactor>
</comment>
<comment type="pathway">
    <text evidence="1">Amino-acid biosynthesis; D-alanine biosynthesis; D-alanine from L-alanine: step 1/1.</text>
</comment>
<comment type="similarity">
    <text evidence="1">Belongs to the alanine racemase family.</text>
</comment>
<name>ALR_SHELP</name>
<keyword id="KW-0413">Isomerase</keyword>
<keyword id="KW-0663">Pyridoxal phosphate</keyword>
<keyword id="KW-1185">Reference proteome</keyword>
<feature type="chain" id="PRO_1000164615" description="Alanine racemase">
    <location>
        <begin position="1"/>
        <end position="358"/>
    </location>
</feature>
<feature type="active site" description="Proton acceptor; specific for D-alanine" evidence="1">
    <location>
        <position position="35"/>
    </location>
</feature>
<feature type="active site" description="Proton acceptor; specific for L-alanine" evidence="1">
    <location>
        <position position="255"/>
    </location>
</feature>
<feature type="binding site" evidence="1">
    <location>
        <position position="130"/>
    </location>
    <ligand>
        <name>substrate</name>
    </ligand>
</feature>
<feature type="binding site" evidence="1">
    <location>
        <position position="303"/>
    </location>
    <ligand>
        <name>substrate</name>
    </ligand>
</feature>
<feature type="modified residue" description="N6-(pyridoxal phosphate)lysine" evidence="1">
    <location>
        <position position="35"/>
    </location>
</feature>